<gene>
    <name type="primary">LAC3</name>
    <name type="ordered locus">Os01g0827300</name>
    <name type="ordered locus">LOC_Os01g61160</name>
    <name type="ORF">B1088C09.5</name>
    <name evidence="4" type="ORF">OsJ_03932</name>
</gene>
<feature type="signal peptide" evidence="2">
    <location>
        <begin position="1"/>
        <end position="24"/>
    </location>
</feature>
<feature type="chain" id="PRO_0000291888" description="Laccase-3">
    <location>
        <begin position="25"/>
        <end position="567"/>
    </location>
</feature>
<feature type="domain" description="Plastocyanin-like 1">
    <location>
        <begin position="32"/>
        <end position="148"/>
    </location>
</feature>
<feature type="domain" description="Plastocyanin-like 2">
    <location>
        <begin position="158"/>
        <end position="310"/>
    </location>
</feature>
<feature type="domain" description="Plastocyanin-like 3">
    <location>
        <begin position="415"/>
        <end position="551"/>
    </location>
</feature>
<feature type="binding site" evidence="1">
    <location>
        <position position="82"/>
    </location>
    <ligand>
        <name>Cu cation</name>
        <dbReference type="ChEBI" id="CHEBI:23378"/>
        <label>1</label>
    </ligand>
</feature>
<feature type="binding site" evidence="1">
    <location>
        <position position="84"/>
    </location>
    <ligand>
        <name>Cu cation</name>
        <dbReference type="ChEBI" id="CHEBI:23378"/>
        <label>2</label>
    </ligand>
</feature>
<feature type="binding site" evidence="1">
    <location>
        <position position="127"/>
    </location>
    <ligand>
        <name>Cu cation</name>
        <dbReference type="ChEBI" id="CHEBI:23378"/>
        <label>2</label>
    </ligand>
</feature>
<feature type="binding site" evidence="1">
    <location>
        <position position="129"/>
    </location>
    <ligand>
        <name>Cu cation</name>
        <dbReference type="ChEBI" id="CHEBI:23378"/>
        <label>3</label>
    </ligand>
</feature>
<feature type="binding site" evidence="1">
    <location>
        <position position="468"/>
    </location>
    <ligand>
        <name>Cu cation</name>
        <dbReference type="ChEBI" id="CHEBI:23378"/>
        <label>4</label>
    </ligand>
</feature>
<feature type="binding site" evidence="1">
    <location>
        <position position="471"/>
    </location>
    <ligand>
        <name>Cu cation</name>
        <dbReference type="ChEBI" id="CHEBI:23378"/>
        <label>1</label>
    </ligand>
</feature>
<feature type="binding site" evidence="1">
    <location>
        <position position="473"/>
    </location>
    <ligand>
        <name>Cu cation</name>
        <dbReference type="ChEBI" id="CHEBI:23378"/>
        <label>3</label>
    </ligand>
</feature>
<feature type="binding site" evidence="1">
    <location>
        <position position="530"/>
    </location>
    <ligand>
        <name>Cu cation</name>
        <dbReference type="ChEBI" id="CHEBI:23378"/>
        <label>3</label>
    </ligand>
</feature>
<feature type="binding site" evidence="1">
    <location>
        <position position="531"/>
    </location>
    <ligand>
        <name>Cu cation</name>
        <dbReference type="ChEBI" id="CHEBI:23378"/>
        <label>4</label>
    </ligand>
</feature>
<feature type="binding site" evidence="1">
    <location>
        <position position="532"/>
    </location>
    <ligand>
        <name>Cu cation</name>
        <dbReference type="ChEBI" id="CHEBI:23378"/>
        <label>2</label>
    </ligand>
</feature>
<feature type="binding site" evidence="1">
    <location>
        <position position="536"/>
    </location>
    <ligand>
        <name>Cu cation</name>
        <dbReference type="ChEBI" id="CHEBI:23378"/>
        <label>4</label>
    </ligand>
</feature>
<feature type="glycosylation site" description="N-linked (GlcNAc...) asparagine" evidence="2">
    <location>
        <position position="78"/>
    </location>
</feature>
<feature type="glycosylation site" description="N-linked (GlcNAc...) asparagine" evidence="2">
    <location>
        <position position="148"/>
    </location>
</feature>
<feature type="glycosylation site" description="N-linked (GlcNAc...) asparagine" evidence="2">
    <location>
        <position position="187"/>
    </location>
</feature>
<feature type="glycosylation site" description="N-linked (GlcNAc...) asparagine" evidence="2">
    <location>
        <position position="203"/>
    </location>
</feature>
<feature type="glycosylation site" description="N-linked (GlcNAc...) asparagine" evidence="2">
    <location>
        <position position="298"/>
    </location>
</feature>
<feature type="glycosylation site" description="N-linked (GlcNAc...) asparagine" evidence="2">
    <location>
        <position position="330"/>
    </location>
</feature>
<feature type="glycosylation site" description="N-linked (GlcNAc...) asparagine" evidence="2">
    <location>
        <position position="379"/>
    </location>
</feature>
<feature type="glycosylation site" description="N-linked (GlcNAc...) asparagine" evidence="2">
    <location>
        <position position="389"/>
    </location>
</feature>
<accession>Q941X2</accession>
<accession>B7EK61</accession>
<organism>
    <name type="scientific">Oryza sativa subsp. japonica</name>
    <name type="common">Rice</name>
    <dbReference type="NCBI Taxonomy" id="39947"/>
    <lineage>
        <taxon>Eukaryota</taxon>
        <taxon>Viridiplantae</taxon>
        <taxon>Streptophyta</taxon>
        <taxon>Embryophyta</taxon>
        <taxon>Tracheophyta</taxon>
        <taxon>Spermatophyta</taxon>
        <taxon>Magnoliopsida</taxon>
        <taxon>Liliopsida</taxon>
        <taxon>Poales</taxon>
        <taxon>Poaceae</taxon>
        <taxon>BOP clade</taxon>
        <taxon>Oryzoideae</taxon>
        <taxon>Oryzeae</taxon>
        <taxon>Oryzinae</taxon>
        <taxon>Oryza</taxon>
        <taxon>Oryza sativa</taxon>
    </lineage>
</organism>
<reference key="1">
    <citation type="journal article" date="2002" name="Nature">
        <title>The genome sequence and structure of rice chromosome 1.</title>
        <authorList>
            <person name="Sasaki T."/>
            <person name="Matsumoto T."/>
            <person name="Yamamoto K."/>
            <person name="Sakata K."/>
            <person name="Baba T."/>
            <person name="Katayose Y."/>
            <person name="Wu J."/>
            <person name="Niimura Y."/>
            <person name="Cheng Z."/>
            <person name="Nagamura Y."/>
            <person name="Antonio B.A."/>
            <person name="Kanamori H."/>
            <person name="Hosokawa S."/>
            <person name="Masukawa M."/>
            <person name="Arikawa K."/>
            <person name="Chiden Y."/>
            <person name="Hayashi M."/>
            <person name="Okamoto M."/>
            <person name="Ando T."/>
            <person name="Aoki H."/>
            <person name="Arita K."/>
            <person name="Hamada M."/>
            <person name="Harada C."/>
            <person name="Hijishita S."/>
            <person name="Honda M."/>
            <person name="Ichikawa Y."/>
            <person name="Idonuma A."/>
            <person name="Iijima M."/>
            <person name="Ikeda M."/>
            <person name="Ikeno M."/>
            <person name="Ito S."/>
            <person name="Ito T."/>
            <person name="Ito Y."/>
            <person name="Ito Y."/>
            <person name="Iwabuchi A."/>
            <person name="Kamiya K."/>
            <person name="Karasawa W."/>
            <person name="Katagiri S."/>
            <person name="Kikuta A."/>
            <person name="Kobayashi N."/>
            <person name="Kono I."/>
            <person name="Machita K."/>
            <person name="Maehara T."/>
            <person name="Mizuno H."/>
            <person name="Mizubayashi T."/>
            <person name="Mukai Y."/>
            <person name="Nagasaki H."/>
            <person name="Nakashima M."/>
            <person name="Nakama Y."/>
            <person name="Nakamichi Y."/>
            <person name="Nakamura M."/>
            <person name="Namiki N."/>
            <person name="Negishi M."/>
            <person name="Ohta I."/>
            <person name="Ono N."/>
            <person name="Saji S."/>
            <person name="Sakai K."/>
            <person name="Shibata M."/>
            <person name="Shimokawa T."/>
            <person name="Shomura A."/>
            <person name="Song J."/>
            <person name="Takazaki Y."/>
            <person name="Terasawa K."/>
            <person name="Tsuji K."/>
            <person name="Waki K."/>
            <person name="Yamagata H."/>
            <person name="Yamane H."/>
            <person name="Yoshiki S."/>
            <person name="Yoshihara R."/>
            <person name="Yukawa K."/>
            <person name="Zhong H."/>
            <person name="Iwama H."/>
            <person name="Endo T."/>
            <person name="Ito H."/>
            <person name="Hahn J.H."/>
            <person name="Kim H.-I."/>
            <person name="Eun M.-Y."/>
            <person name="Yano M."/>
            <person name="Jiang J."/>
            <person name="Gojobori T."/>
        </authorList>
    </citation>
    <scope>NUCLEOTIDE SEQUENCE [LARGE SCALE GENOMIC DNA]</scope>
    <source>
        <strain>cv. Nipponbare</strain>
    </source>
</reference>
<reference key="2">
    <citation type="journal article" date="2005" name="Nature">
        <title>The map-based sequence of the rice genome.</title>
        <authorList>
            <consortium name="International rice genome sequencing project (IRGSP)"/>
        </authorList>
    </citation>
    <scope>NUCLEOTIDE SEQUENCE [LARGE SCALE GENOMIC DNA]</scope>
    <source>
        <strain>cv. Nipponbare</strain>
    </source>
</reference>
<reference key="3">
    <citation type="journal article" date="2008" name="Nucleic Acids Res.">
        <title>The rice annotation project database (RAP-DB): 2008 update.</title>
        <authorList>
            <consortium name="The rice annotation project (RAP)"/>
        </authorList>
    </citation>
    <scope>GENOME REANNOTATION</scope>
    <source>
        <strain>cv. Nipponbare</strain>
    </source>
</reference>
<reference key="4">
    <citation type="journal article" date="2013" name="Rice">
        <title>Improvement of the Oryza sativa Nipponbare reference genome using next generation sequence and optical map data.</title>
        <authorList>
            <person name="Kawahara Y."/>
            <person name="de la Bastide M."/>
            <person name="Hamilton J.P."/>
            <person name="Kanamori H."/>
            <person name="McCombie W.R."/>
            <person name="Ouyang S."/>
            <person name="Schwartz D.C."/>
            <person name="Tanaka T."/>
            <person name="Wu J."/>
            <person name="Zhou S."/>
            <person name="Childs K.L."/>
            <person name="Davidson R.M."/>
            <person name="Lin H."/>
            <person name="Quesada-Ocampo L."/>
            <person name="Vaillancourt B."/>
            <person name="Sakai H."/>
            <person name="Lee S.S."/>
            <person name="Kim J."/>
            <person name="Numa H."/>
            <person name="Itoh T."/>
            <person name="Buell C.R."/>
            <person name="Matsumoto T."/>
        </authorList>
    </citation>
    <scope>GENOME REANNOTATION</scope>
    <source>
        <strain>cv. Nipponbare</strain>
    </source>
</reference>
<reference key="5">
    <citation type="journal article" date="2005" name="PLoS Biol.">
        <title>The genomes of Oryza sativa: a history of duplications.</title>
        <authorList>
            <person name="Yu J."/>
            <person name="Wang J."/>
            <person name="Lin W."/>
            <person name="Li S."/>
            <person name="Li H."/>
            <person name="Zhou J."/>
            <person name="Ni P."/>
            <person name="Dong W."/>
            <person name="Hu S."/>
            <person name="Zeng C."/>
            <person name="Zhang J."/>
            <person name="Zhang Y."/>
            <person name="Li R."/>
            <person name="Xu Z."/>
            <person name="Li S."/>
            <person name="Li X."/>
            <person name="Zheng H."/>
            <person name="Cong L."/>
            <person name="Lin L."/>
            <person name="Yin J."/>
            <person name="Geng J."/>
            <person name="Li G."/>
            <person name="Shi J."/>
            <person name="Liu J."/>
            <person name="Lv H."/>
            <person name="Li J."/>
            <person name="Wang J."/>
            <person name="Deng Y."/>
            <person name="Ran L."/>
            <person name="Shi X."/>
            <person name="Wang X."/>
            <person name="Wu Q."/>
            <person name="Li C."/>
            <person name="Ren X."/>
            <person name="Wang J."/>
            <person name="Wang X."/>
            <person name="Li D."/>
            <person name="Liu D."/>
            <person name="Zhang X."/>
            <person name="Ji Z."/>
            <person name="Zhao W."/>
            <person name="Sun Y."/>
            <person name="Zhang Z."/>
            <person name="Bao J."/>
            <person name="Han Y."/>
            <person name="Dong L."/>
            <person name="Ji J."/>
            <person name="Chen P."/>
            <person name="Wu S."/>
            <person name="Liu J."/>
            <person name="Xiao Y."/>
            <person name="Bu D."/>
            <person name="Tan J."/>
            <person name="Yang L."/>
            <person name="Ye C."/>
            <person name="Zhang J."/>
            <person name="Xu J."/>
            <person name="Zhou Y."/>
            <person name="Yu Y."/>
            <person name="Zhang B."/>
            <person name="Zhuang S."/>
            <person name="Wei H."/>
            <person name="Liu B."/>
            <person name="Lei M."/>
            <person name="Yu H."/>
            <person name="Li Y."/>
            <person name="Xu H."/>
            <person name="Wei S."/>
            <person name="He X."/>
            <person name="Fang L."/>
            <person name="Zhang Z."/>
            <person name="Zhang Y."/>
            <person name="Huang X."/>
            <person name="Su Z."/>
            <person name="Tong W."/>
            <person name="Li J."/>
            <person name="Tong Z."/>
            <person name="Li S."/>
            <person name="Ye J."/>
            <person name="Wang L."/>
            <person name="Fang L."/>
            <person name="Lei T."/>
            <person name="Chen C.-S."/>
            <person name="Chen H.-C."/>
            <person name="Xu Z."/>
            <person name="Li H."/>
            <person name="Huang H."/>
            <person name="Zhang F."/>
            <person name="Xu H."/>
            <person name="Li N."/>
            <person name="Zhao C."/>
            <person name="Li S."/>
            <person name="Dong L."/>
            <person name="Huang Y."/>
            <person name="Li L."/>
            <person name="Xi Y."/>
            <person name="Qi Q."/>
            <person name="Li W."/>
            <person name="Zhang B."/>
            <person name="Hu W."/>
            <person name="Zhang Y."/>
            <person name="Tian X."/>
            <person name="Jiao Y."/>
            <person name="Liang X."/>
            <person name="Jin J."/>
            <person name="Gao L."/>
            <person name="Zheng W."/>
            <person name="Hao B."/>
            <person name="Liu S.-M."/>
            <person name="Wang W."/>
            <person name="Yuan L."/>
            <person name="Cao M."/>
            <person name="McDermott J."/>
            <person name="Samudrala R."/>
            <person name="Wang J."/>
            <person name="Wong G.K.-S."/>
            <person name="Yang H."/>
        </authorList>
    </citation>
    <scope>NUCLEOTIDE SEQUENCE [LARGE SCALE GENOMIC DNA]</scope>
    <source>
        <strain>cv. Nipponbare</strain>
    </source>
</reference>
<reference key="6">
    <citation type="journal article" date="2003" name="Science">
        <title>Collection, mapping, and annotation of over 28,000 cDNA clones from japonica rice.</title>
        <authorList>
            <consortium name="The rice full-length cDNA consortium"/>
        </authorList>
    </citation>
    <scope>NUCLEOTIDE SEQUENCE [LARGE SCALE MRNA]</scope>
    <source>
        <strain>cv. Nipponbare</strain>
    </source>
</reference>
<sequence length="567" mass="62646">MASSSSSRLLFLLSCSVLALLAGAEVHHHEFIVQETPVKRLCKTHNVITVNGQLPGPTLEVREGDTVVINVVNHAQYNVTIHWHGIRQFRTGWADGPEFVTQCPIKPGGSYKYRFTIEGQEGTLWWHAHSSWLRATVYGALIIRPRENKTYPFEKPAREVPLILGEWWDADPIQVIREAQRTGAAPNISDAYTINGQPGDLYNCSKEETTAVPVKPGETALLRFINAALNQELFVSIAQHKMTVVGVDASYTKPFTTSVLMIAPGQTTDVLVTMDQAPTRYYLAARAYDSAQGVAFDNTTTTAVIEYDCGCATDFGPSIPPAFPVLPAFNDTNTATAFAAGIRSPHEVKIPGPVDENLFFTVGVGLFNCEPGQQCGGPNNTRFTASMNNISFVFPQTTSLLHAHYYGIPGVFTTDFPAYPPVQFDYTAQNVPRYLWQPVPATKLYKLKFGSVVQIVLQDTSIVSPENHPIHIHGYDFYILAEGFGNFDPKKDAKKFNYVDPPQRNTVAVPTNGWAVIRFVADNPGVWLMHCHLDVHITWGLAMAFLVEDGYGKLETLEAPPVDLPMC</sequence>
<dbReference type="EC" id="1.10.3.2"/>
<dbReference type="EMBL" id="AP003734">
    <property type="protein sequence ID" value="BAB68098.1"/>
    <property type="molecule type" value="Genomic_DNA"/>
</dbReference>
<dbReference type="EMBL" id="AP008207">
    <property type="protein sequence ID" value="BAF06593.1"/>
    <property type="molecule type" value="Genomic_DNA"/>
</dbReference>
<dbReference type="EMBL" id="AP014957">
    <property type="protein sequence ID" value="BAS75026.1"/>
    <property type="molecule type" value="Genomic_DNA"/>
</dbReference>
<dbReference type="EMBL" id="CM000138">
    <property type="protein sequence ID" value="EEE55611.1"/>
    <property type="molecule type" value="Genomic_DNA"/>
</dbReference>
<dbReference type="EMBL" id="AK071929">
    <property type="protein sequence ID" value="BAG92758.1"/>
    <property type="molecule type" value="mRNA"/>
</dbReference>
<dbReference type="RefSeq" id="XP_015624567.1">
    <property type="nucleotide sequence ID" value="XM_015769081.1"/>
</dbReference>
<dbReference type="SMR" id="Q941X2"/>
<dbReference type="FunCoup" id="Q941X2">
    <property type="interactions" value="11"/>
</dbReference>
<dbReference type="STRING" id="39947.Q941X2"/>
<dbReference type="GlyCosmos" id="Q941X2">
    <property type="glycosylation" value="8 sites, No reported glycans"/>
</dbReference>
<dbReference type="PaxDb" id="39947-Q941X2"/>
<dbReference type="EnsemblPlants" id="Os01t0827300-01">
    <property type="protein sequence ID" value="Os01t0827300-01"/>
    <property type="gene ID" value="Os01g0827300"/>
</dbReference>
<dbReference type="Gramene" id="Os01t0827300-01">
    <property type="protein sequence ID" value="Os01t0827300-01"/>
    <property type="gene ID" value="Os01g0827300"/>
</dbReference>
<dbReference type="KEGG" id="dosa:Os01g0827300"/>
<dbReference type="eggNOG" id="KOG1263">
    <property type="taxonomic scope" value="Eukaryota"/>
</dbReference>
<dbReference type="HOGENOM" id="CLU_006504_6_3_1"/>
<dbReference type="InParanoid" id="Q941X2"/>
<dbReference type="OMA" id="GFWLYHC"/>
<dbReference type="OrthoDB" id="2121828at2759"/>
<dbReference type="Proteomes" id="UP000000763">
    <property type="component" value="Chromosome 1"/>
</dbReference>
<dbReference type="Proteomes" id="UP000007752">
    <property type="component" value="Chromosome 1"/>
</dbReference>
<dbReference type="Proteomes" id="UP000059680">
    <property type="component" value="Chromosome 1"/>
</dbReference>
<dbReference type="GO" id="GO:0048046">
    <property type="term" value="C:apoplast"/>
    <property type="evidence" value="ECO:0007669"/>
    <property type="project" value="UniProtKB-SubCell"/>
</dbReference>
<dbReference type="GO" id="GO:0005507">
    <property type="term" value="F:copper ion binding"/>
    <property type="evidence" value="ECO:0007669"/>
    <property type="project" value="InterPro"/>
</dbReference>
<dbReference type="GO" id="GO:0052716">
    <property type="term" value="F:hydroquinone:oxygen oxidoreductase activity"/>
    <property type="evidence" value="ECO:0007669"/>
    <property type="project" value="UniProtKB-EC"/>
</dbReference>
<dbReference type="GO" id="GO:0016491">
    <property type="term" value="F:oxidoreductase activity"/>
    <property type="evidence" value="ECO:0000318"/>
    <property type="project" value="GO_Central"/>
</dbReference>
<dbReference type="GO" id="GO:0046274">
    <property type="term" value="P:lignin catabolic process"/>
    <property type="evidence" value="ECO:0007669"/>
    <property type="project" value="UniProtKB-KW"/>
</dbReference>
<dbReference type="CDD" id="cd13849">
    <property type="entry name" value="CuRO_1_LCC_plant"/>
    <property type="match status" value="1"/>
</dbReference>
<dbReference type="CDD" id="cd13875">
    <property type="entry name" value="CuRO_2_LCC_plant"/>
    <property type="match status" value="1"/>
</dbReference>
<dbReference type="CDD" id="cd13897">
    <property type="entry name" value="CuRO_3_LCC_plant"/>
    <property type="match status" value="1"/>
</dbReference>
<dbReference type="FunFam" id="2.60.40.420:FF:000049">
    <property type="entry name" value="Laccase"/>
    <property type="match status" value="1"/>
</dbReference>
<dbReference type="FunFam" id="2.60.40.420:FF:000062">
    <property type="entry name" value="Laccase"/>
    <property type="match status" value="1"/>
</dbReference>
<dbReference type="Gene3D" id="2.60.40.420">
    <property type="entry name" value="Cupredoxins - blue copper proteins"/>
    <property type="match status" value="3"/>
</dbReference>
<dbReference type="InterPro" id="IPR011707">
    <property type="entry name" value="Cu-oxidase-like_N"/>
</dbReference>
<dbReference type="InterPro" id="IPR001117">
    <property type="entry name" value="Cu-oxidase_2nd"/>
</dbReference>
<dbReference type="InterPro" id="IPR011706">
    <property type="entry name" value="Cu-oxidase_C"/>
</dbReference>
<dbReference type="InterPro" id="IPR045087">
    <property type="entry name" value="Cu-oxidase_fam"/>
</dbReference>
<dbReference type="InterPro" id="IPR033138">
    <property type="entry name" value="Cu_oxidase_CS"/>
</dbReference>
<dbReference type="InterPro" id="IPR002355">
    <property type="entry name" value="Cu_oxidase_Cu_BS"/>
</dbReference>
<dbReference type="InterPro" id="IPR008972">
    <property type="entry name" value="Cupredoxin"/>
</dbReference>
<dbReference type="InterPro" id="IPR034288">
    <property type="entry name" value="CuRO_1_LCC"/>
</dbReference>
<dbReference type="InterPro" id="IPR034285">
    <property type="entry name" value="CuRO_2_LCC"/>
</dbReference>
<dbReference type="InterPro" id="IPR034289">
    <property type="entry name" value="CuRO_3_LCC"/>
</dbReference>
<dbReference type="InterPro" id="IPR017761">
    <property type="entry name" value="Laccase"/>
</dbReference>
<dbReference type="NCBIfam" id="TIGR03389">
    <property type="entry name" value="laccase"/>
    <property type="match status" value="1"/>
</dbReference>
<dbReference type="PANTHER" id="PTHR11709:SF431">
    <property type="entry name" value="LACCASE-5"/>
    <property type="match status" value="1"/>
</dbReference>
<dbReference type="PANTHER" id="PTHR11709">
    <property type="entry name" value="MULTI-COPPER OXIDASE"/>
    <property type="match status" value="1"/>
</dbReference>
<dbReference type="Pfam" id="PF00394">
    <property type="entry name" value="Cu-oxidase"/>
    <property type="match status" value="1"/>
</dbReference>
<dbReference type="Pfam" id="PF07731">
    <property type="entry name" value="Cu-oxidase_2"/>
    <property type="match status" value="1"/>
</dbReference>
<dbReference type="Pfam" id="PF07732">
    <property type="entry name" value="Cu-oxidase_3"/>
    <property type="match status" value="1"/>
</dbReference>
<dbReference type="SUPFAM" id="SSF49503">
    <property type="entry name" value="Cupredoxins"/>
    <property type="match status" value="3"/>
</dbReference>
<dbReference type="PROSITE" id="PS00079">
    <property type="entry name" value="MULTICOPPER_OXIDASE1"/>
    <property type="match status" value="1"/>
</dbReference>
<dbReference type="PROSITE" id="PS00080">
    <property type="entry name" value="MULTICOPPER_OXIDASE2"/>
    <property type="match status" value="1"/>
</dbReference>
<keyword id="KW-0052">Apoplast</keyword>
<keyword id="KW-0186">Copper</keyword>
<keyword id="KW-0325">Glycoprotein</keyword>
<keyword id="KW-0439">Lignin degradation</keyword>
<keyword id="KW-0479">Metal-binding</keyword>
<keyword id="KW-0560">Oxidoreductase</keyword>
<keyword id="KW-1185">Reference proteome</keyword>
<keyword id="KW-0677">Repeat</keyword>
<keyword id="KW-0964">Secreted</keyword>
<keyword id="KW-0732">Signal</keyword>
<evidence type="ECO:0000250" key="1"/>
<evidence type="ECO:0000255" key="2"/>
<evidence type="ECO:0000305" key="3"/>
<evidence type="ECO:0000312" key="4">
    <source>
        <dbReference type="EMBL" id="EEE55611.1"/>
    </source>
</evidence>
<comment type="function">
    <text evidence="1">Lignin degradation and detoxification of lignin-derived products.</text>
</comment>
<comment type="catalytic activity">
    <reaction>
        <text>4 hydroquinone + O2 = 4 benzosemiquinone + 2 H2O</text>
        <dbReference type="Rhea" id="RHEA:11276"/>
        <dbReference type="ChEBI" id="CHEBI:15377"/>
        <dbReference type="ChEBI" id="CHEBI:15379"/>
        <dbReference type="ChEBI" id="CHEBI:17594"/>
        <dbReference type="ChEBI" id="CHEBI:17977"/>
        <dbReference type="EC" id="1.10.3.2"/>
    </reaction>
</comment>
<comment type="cofactor">
    <cofactor evidence="1">
        <name>Cu cation</name>
        <dbReference type="ChEBI" id="CHEBI:23378"/>
    </cofactor>
    <text evidence="1">Binds 4 Cu cations per monomer.</text>
</comment>
<comment type="subcellular location">
    <subcellularLocation>
        <location evidence="3">Secreted</location>
        <location evidence="3">Extracellular space</location>
        <location evidence="3">Apoplast</location>
    </subcellularLocation>
</comment>
<comment type="similarity">
    <text evidence="3">Belongs to the multicopper oxidase family.</text>
</comment>
<name>LAC3_ORYSJ</name>
<protein>
    <recommendedName>
        <fullName>Laccase-3</fullName>
        <ecNumber>1.10.3.2</ecNumber>
    </recommendedName>
    <alternativeName>
        <fullName>Benzenediol:oxygen oxidoreductase 3</fullName>
    </alternativeName>
    <alternativeName>
        <fullName>Diphenol oxidase 3</fullName>
    </alternativeName>
    <alternativeName>
        <fullName>Urishiol oxidase 3</fullName>
    </alternativeName>
</protein>
<proteinExistence type="evidence at transcript level"/>